<accession>B7M895</accession>
<dbReference type="EMBL" id="CU928160">
    <property type="protein sequence ID" value="CAQ97871.1"/>
    <property type="molecule type" value="Genomic_DNA"/>
</dbReference>
<dbReference type="RefSeq" id="WP_001295356.1">
    <property type="nucleotide sequence ID" value="NC_011741.1"/>
</dbReference>
<dbReference type="SMR" id="B7M895"/>
<dbReference type="GeneID" id="93776448"/>
<dbReference type="KEGG" id="ecr:ECIAI1_1007"/>
<dbReference type="HOGENOM" id="CLU_123865_1_0_6"/>
<dbReference type="GO" id="GO:0005737">
    <property type="term" value="C:cytoplasm"/>
    <property type="evidence" value="ECO:0007669"/>
    <property type="project" value="UniProtKB-SubCell"/>
</dbReference>
<dbReference type="GO" id="GO:0003677">
    <property type="term" value="F:DNA binding"/>
    <property type="evidence" value="ECO:0007669"/>
    <property type="project" value="InterPro"/>
</dbReference>
<dbReference type="GO" id="GO:0009408">
    <property type="term" value="P:response to heat"/>
    <property type="evidence" value="ECO:0007669"/>
    <property type="project" value="UniProtKB-UniRule"/>
</dbReference>
<dbReference type="Gene3D" id="2.30.30.390">
    <property type="entry name" value="Hemimethylated DNA-binding domain"/>
    <property type="match status" value="1"/>
</dbReference>
<dbReference type="HAMAP" id="MF_01194">
    <property type="entry name" value="HspQ"/>
    <property type="match status" value="1"/>
</dbReference>
<dbReference type="InterPro" id="IPR011722">
    <property type="entry name" value="Hemimethylated_DNA-bd_dom"/>
</dbReference>
<dbReference type="InterPro" id="IPR036623">
    <property type="entry name" value="Hemimethylated_DNA-bd_sf"/>
</dbReference>
<dbReference type="InterPro" id="IPR022866">
    <property type="entry name" value="HspQ"/>
</dbReference>
<dbReference type="NCBIfam" id="NF010729">
    <property type="entry name" value="PRK14129.1"/>
    <property type="match status" value="1"/>
</dbReference>
<dbReference type="NCBIfam" id="TIGR02097">
    <property type="entry name" value="yccV"/>
    <property type="match status" value="1"/>
</dbReference>
<dbReference type="Pfam" id="PF08755">
    <property type="entry name" value="YccV-like"/>
    <property type="match status" value="1"/>
</dbReference>
<dbReference type="SMART" id="SM00992">
    <property type="entry name" value="YccV-like"/>
    <property type="match status" value="1"/>
</dbReference>
<dbReference type="SUPFAM" id="SSF141255">
    <property type="entry name" value="YccV-like"/>
    <property type="match status" value="1"/>
</dbReference>
<feature type="chain" id="PRO_1000138406" description="Heat shock protein HspQ">
    <location>
        <begin position="1"/>
        <end position="105"/>
    </location>
</feature>
<feature type="region of interest" description="Disordered" evidence="2">
    <location>
        <begin position="75"/>
        <end position="105"/>
    </location>
</feature>
<sequence>MIASKFGIGQQVRHSLLGYLGVVVDIDPVYSLSEPSPDELAVNDELRAAPWYHVVMEDDNGLPVHTYLAEAQLSSELQDEHPEQPSMDELAQTIRKQLQAPRLRN</sequence>
<comment type="function">
    <text evidence="1">Involved in the degradation of certain denaturated proteins, including DnaA, during heat shock stress.</text>
</comment>
<comment type="subcellular location">
    <subcellularLocation>
        <location evidence="1">Cytoplasm</location>
    </subcellularLocation>
</comment>
<comment type="similarity">
    <text evidence="1">Belongs to the HspQ family.</text>
</comment>
<protein>
    <recommendedName>
        <fullName evidence="1">Heat shock protein HspQ</fullName>
    </recommendedName>
</protein>
<proteinExistence type="inferred from homology"/>
<name>HSPQ_ECO8A</name>
<organism>
    <name type="scientific">Escherichia coli O8 (strain IAI1)</name>
    <dbReference type="NCBI Taxonomy" id="585034"/>
    <lineage>
        <taxon>Bacteria</taxon>
        <taxon>Pseudomonadati</taxon>
        <taxon>Pseudomonadota</taxon>
        <taxon>Gammaproteobacteria</taxon>
        <taxon>Enterobacterales</taxon>
        <taxon>Enterobacteriaceae</taxon>
        <taxon>Escherichia</taxon>
    </lineage>
</organism>
<gene>
    <name evidence="1" type="primary">hspQ</name>
    <name type="ordered locus">ECIAI1_1007</name>
</gene>
<evidence type="ECO:0000255" key="1">
    <source>
        <dbReference type="HAMAP-Rule" id="MF_01194"/>
    </source>
</evidence>
<evidence type="ECO:0000256" key="2">
    <source>
        <dbReference type="SAM" id="MobiDB-lite"/>
    </source>
</evidence>
<keyword id="KW-0963">Cytoplasm</keyword>
<keyword id="KW-0346">Stress response</keyword>
<reference key="1">
    <citation type="journal article" date="2009" name="PLoS Genet.">
        <title>Organised genome dynamics in the Escherichia coli species results in highly diverse adaptive paths.</title>
        <authorList>
            <person name="Touchon M."/>
            <person name="Hoede C."/>
            <person name="Tenaillon O."/>
            <person name="Barbe V."/>
            <person name="Baeriswyl S."/>
            <person name="Bidet P."/>
            <person name="Bingen E."/>
            <person name="Bonacorsi S."/>
            <person name="Bouchier C."/>
            <person name="Bouvet O."/>
            <person name="Calteau A."/>
            <person name="Chiapello H."/>
            <person name="Clermont O."/>
            <person name="Cruveiller S."/>
            <person name="Danchin A."/>
            <person name="Diard M."/>
            <person name="Dossat C."/>
            <person name="Karoui M.E."/>
            <person name="Frapy E."/>
            <person name="Garry L."/>
            <person name="Ghigo J.M."/>
            <person name="Gilles A.M."/>
            <person name="Johnson J."/>
            <person name="Le Bouguenec C."/>
            <person name="Lescat M."/>
            <person name="Mangenot S."/>
            <person name="Martinez-Jehanne V."/>
            <person name="Matic I."/>
            <person name="Nassif X."/>
            <person name="Oztas S."/>
            <person name="Petit M.A."/>
            <person name="Pichon C."/>
            <person name="Rouy Z."/>
            <person name="Ruf C.S."/>
            <person name="Schneider D."/>
            <person name="Tourret J."/>
            <person name="Vacherie B."/>
            <person name="Vallenet D."/>
            <person name="Medigue C."/>
            <person name="Rocha E.P.C."/>
            <person name="Denamur E."/>
        </authorList>
    </citation>
    <scope>NUCLEOTIDE SEQUENCE [LARGE SCALE GENOMIC DNA]</scope>
    <source>
        <strain>IAI1</strain>
    </source>
</reference>